<reference key="1">
    <citation type="journal article" date="2003" name="Proc. Natl. Acad. Sci. U.S.A.">
        <title>Genome sequence of the cyanobacterium Prochlorococcus marinus SS120, a nearly minimal oxyphototrophic genome.</title>
        <authorList>
            <person name="Dufresne A."/>
            <person name="Salanoubat M."/>
            <person name="Partensky F."/>
            <person name="Artiguenave F."/>
            <person name="Axmann I.M."/>
            <person name="Barbe V."/>
            <person name="Duprat S."/>
            <person name="Galperin M.Y."/>
            <person name="Koonin E.V."/>
            <person name="Le Gall F."/>
            <person name="Makarova K.S."/>
            <person name="Ostrowski M."/>
            <person name="Oztas S."/>
            <person name="Robert C."/>
            <person name="Rogozin I.B."/>
            <person name="Scanlan D.J."/>
            <person name="Tandeau de Marsac N."/>
            <person name="Weissenbach J."/>
            <person name="Wincker P."/>
            <person name="Wolf Y.I."/>
            <person name="Hess W.R."/>
        </authorList>
    </citation>
    <scope>NUCLEOTIDE SEQUENCE [LARGE SCALE GENOMIC DNA]</scope>
    <source>
        <strain>SARG / CCMP1375 / SS120</strain>
    </source>
</reference>
<proteinExistence type="inferred from homology"/>
<gene>
    <name evidence="1" type="primary">valS</name>
    <name type="ordered locus">Pro_1844</name>
</gene>
<keyword id="KW-0030">Aminoacyl-tRNA synthetase</keyword>
<keyword id="KW-0067">ATP-binding</keyword>
<keyword id="KW-0175">Coiled coil</keyword>
<keyword id="KW-0963">Cytoplasm</keyword>
<keyword id="KW-0436">Ligase</keyword>
<keyword id="KW-0547">Nucleotide-binding</keyword>
<keyword id="KW-0648">Protein biosynthesis</keyword>
<keyword id="KW-1185">Reference proteome</keyword>
<comment type="function">
    <text evidence="1">Catalyzes the attachment of valine to tRNA(Val). As ValRS can inadvertently accommodate and process structurally similar amino acids such as threonine, to avoid such errors, it has a 'posttransfer' editing activity that hydrolyzes mischarged Thr-tRNA(Val) in a tRNA-dependent manner.</text>
</comment>
<comment type="catalytic activity">
    <reaction evidence="1">
        <text>tRNA(Val) + L-valine + ATP = L-valyl-tRNA(Val) + AMP + diphosphate</text>
        <dbReference type="Rhea" id="RHEA:10704"/>
        <dbReference type="Rhea" id="RHEA-COMP:9672"/>
        <dbReference type="Rhea" id="RHEA-COMP:9708"/>
        <dbReference type="ChEBI" id="CHEBI:30616"/>
        <dbReference type="ChEBI" id="CHEBI:33019"/>
        <dbReference type="ChEBI" id="CHEBI:57762"/>
        <dbReference type="ChEBI" id="CHEBI:78442"/>
        <dbReference type="ChEBI" id="CHEBI:78537"/>
        <dbReference type="ChEBI" id="CHEBI:456215"/>
        <dbReference type="EC" id="6.1.1.9"/>
    </reaction>
</comment>
<comment type="subunit">
    <text evidence="1">Monomer.</text>
</comment>
<comment type="subcellular location">
    <subcellularLocation>
        <location evidence="1">Cytoplasm</location>
    </subcellularLocation>
</comment>
<comment type="domain">
    <text evidence="1">ValRS has two distinct active sites: one for aminoacylation and one for editing. The misactivated threonine is translocated from the active site to the editing site.</text>
</comment>
<comment type="domain">
    <text evidence="1">The C-terminal coiled-coil domain is crucial for aminoacylation activity.</text>
</comment>
<comment type="similarity">
    <text evidence="1">Belongs to the class-I aminoacyl-tRNA synthetase family. ValS type 1 subfamily.</text>
</comment>
<organism>
    <name type="scientific">Prochlorococcus marinus (strain SARG / CCMP1375 / SS120)</name>
    <dbReference type="NCBI Taxonomy" id="167539"/>
    <lineage>
        <taxon>Bacteria</taxon>
        <taxon>Bacillati</taxon>
        <taxon>Cyanobacteriota</taxon>
        <taxon>Cyanophyceae</taxon>
        <taxon>Synechococcales</taxon>
        <taxon>Prochlorococcaceae</taxon>
        <taxon>Prochlorococcus</taxon>
    </lineage>
</organism>
<sequence length="933" mass="106253">MVDQPDSENLDHAVDALSKRYDPLGTECRWQKIWEEEGAFHPDPNDEGEPFSVVIPPPNVTGSLHMGHAFNTALIDTIVRFQRLQGKNVLCLPGTDHASIAVQTILEKQLKKEGLTRDELGRSAFLERAWAWKSESGGRIVEQLRRLGYSVDWKRERFTMDTRLSKAVSEAFVRLHQQGLIYRGEYLVNWCPASSSAVSDLEVETKEVDGYLWHFQYPLSKINDSNGIRFLEVATTRPETMLGDVAVAVNPSDSRYSNIVGQTLTLPFLGREIPVIADDHVDMDFGTGCVKVTPAHDPNDFAIGQRHNLRQITVMNKDGTMNAEAGPFEGLDRFEARKAVVKALEQKGLLTKVEPYRHSVPFSDRGKVPIEPLLSTQWFVRMEPMAERCRSHLGKDEPRFYPDRWAKVYRDWLTGIRDWCISRQLWWGHRIPAWFVVSETNNELTDDTPYIVALSEKDALLEAQKKYGTDAVLRQDEDVLDTWFSSGLWPFSTLGWPDKTNADLSRWYPTNTLVTGFDIIFFWVARMTMMAGAFTGKMPFADVYIHGLVRDEQNRKMSKSAGNGIDPLLLIDRYGTDALRFALVKEVAGAGQDIRIDYDRAKDTSATVEAARNFANKLWNATRFALINLGDTTFKETFDELEHNRLELSDQWILSKLSKVNNETAKRYKKYALGEAAKGLYEFAWNDFCDWYLELIKRRLNLGESPSEADLSNRKKSQIVMFKVLRELLVMMHPLMPHLTEELWHGVTGFSNKKLLALQSWPALDKDLIDEDLELSFSELFGAIRLVRNLRAEAGLKPSQRAPVRFVTKNQNLLNLLKKATQDIQALTRANKVEILHPREIFEESSGRSLAGVSGELEVLLPIEGLVDLQALRNRLQKDLSKAENELSILSKRLDNPSFVQKAPEKVIEECRLKLSDAEAQAELVRQRLLGLK</sequence>
<feature type="chain" id="PRO_0000224530" description="Valine--tRNA ligase">
    <location>
        <begin position="1"/>
        <end position="933"/>
    </location>
</feature>
<feature type="coiled-coil region" evidence="1">
    <location>
        <begin position="807"/>
        <end position="833"/>
    </location>
</feature>
<feature type="coiled-coil region" evidence="1">
    <location>
        <begin position="864"/>
        <end position="933"/>
    </location>
</feature>
<feature type="short sequence motif" description="'HIGH' region">
    <location>
        <begin position="58"/>
        <end position="68"/>
    </location>
</feature>
<feature type="short sequence motif" description="'KMSKS' region">
    <location>
        <begin position="556"/>
        <end position="560"/>
    </location>
</feature>
<feature type="binding site" evidence="1">
    <location>
        <position position="559"/>
    </location>
    <ligand>
        <name>ATP</name>
        <dbReference type="ChEBI" id="CHEBI:30616"/>
    </ligand>
</feature>
<evidence type="ECO:0000255" key="1">
    <source>
        <dbReference type="HAMAP-Rule" id="MF_02004"/>
    </source>
</evidence>
<dbReference type="EC" id="6.1.1.9" evidence="1"/>
<dbReference type="EMBL" id="AE017126">
    <property type="protein sequence ID" value="AAQ00888.1"/>
    <property type="molecule type" value="Genomic_DNA"/>
</dbReference>
<dbReference type="RefSeq" id="NP_876235.1">
    <property type="nucleotide sequence ID" value="NC_005042.1"/>
</dbReference>
<dbReference type="RefSeq" id="WP_011125993.1">
    <property type="nucleotide sequence ID" value="NC_005042.1"/>
</dbReference>
<dbReference type="SMR" id="Q7V9I9"/>
<dbReference type="STRING" id="167539.Pro_1844"/>
<dbReference type="EnsemblBacteria" id="AAQ00888">
    <property type="protein sequence ID" value="AAQ00888"/>
    <property type="gene ID" value="Pro_1844"/>
</dbReference>
<dbReference type="KEGG" id="pma:Pro_1844"/>
<dbReference type="PATRIC" id="fig|167539.5.peg.1946"/>
<dbReference type="eggNOG" id="COG0525">
    <property type="taxonomic scope" value="Bacteria"/>
</dbReference>
<dbReference type="HOGENOM" id="CLU_001493_0_2_3"/>
<dbReference type="OrthoDB" id="9810365at2"/>
<dbReference type="Proteomes" id="UP000001420">
    <property type="component" value="Chromosome"/>
</dbReference>
<dbReference type="GO" id="GO:0005829">
    <property type="term" value="C:cytosol"/>
    <property type="evidence" value="ECO:0007669"/>
    <property type="project" value="TreeGrafter"/>
</dbReference>
<dbReference type="GO" id="GO:0002161">
    <property type="term" value="F:aminoacyl-tRNA deacylase activity"/>
    <property type="evidence" value="ECO:0007669"/>
    <property type="project" value="InterPro"/>
</dbReference>
<dbReference type="GO" id="GO:0005524">
    <property type="term" value="F:ATP binding"/>
    <property type="evidence" value="ECO:0007669"/>
    <property type="project" value="UniProtKB-UniRule"/>
</dbReference>
<dbReference type="GO" id="GO:0004832">
    <property type="term" value="F:valine-tRNA ligase activity"/>
    <property type="evidence" value="ECO:0007669"/>
    <property type="project" value="UniProtKB-UniRule"/>
</dbReference>
<dbReference type="GO" id="GO:0006438">
    <property type="term" value="P:valyl-tRNA aminoacylation"/>
    <property type="evidence" value="ECO:0007669"/>
    <property type="project" value="UniProtKB-UniRule"/>
</dbReference>
<dbReference type="CDD" id="cd07962">
    <property type="entry name" value="Anticodon_Ia_Val"/>
    <property type="match status" value="1"/>
</dbReference>
<dbReference type="CDD" id="cd00817">
    <property type="entry name" value="ValRS_core"/>
    <property type="match status" value="1"/>
</dbReference>
<dbReference type="FunFam" id="1.10.287.380:FF:000001">
    <property type="entry name" value="Valine--tRNA ligase"/>
    <property type="match status" value="1"/>
</dbReference>
<dbReference type="FunFam" id="3.40.50.620:FF:000032">
    <property type="entry name" value="Valine--tRNA ligase"/>
    <property type="match status" value="1"/>
</dbReference>
<dbReference type="FunFam" id="3.40.50.620:FF:000078">
    <property type="entry name" value="Valine--tRNA ligase, mitochondrial"/>
    <property type="match status" value="1"/>
</dbReference>
<dbReference type="FunFam" id="3.90.740.10:FF:000005">
    <property type="entry name" value="Valine--tRNA ligase, mitochondrial"/>
    <property type="match status" value="1"/>
</dbReference>
<dbReference type="Gene3D" id="3.40.50.620">
    <property type="entry name" value="HUPs"/>
    <property type="match status" value="2"/>
</dbReference>
<dbReference type="Gene3D" id="1.10.730.10">
    <property type="entry name" value="Isoleucyl-tRNA Synthetase, Domain 1"/>
    <property type="match status" value="1"/>
</dbReference>
<dbReference type="Gene3D" id="1.10.287.380">
    <property type="entry name" value="Valyl-tRNA synthetase, C-terminal domain"/>
    <property type="match status" value="1"/>
</dbReference>
<dbReference type="Gene3D" id="3.90.740.10">
    <property type="entry name" value="Valyl/Leucyl/Isoleucyl-tRNA synthetase, editing domain"/>
    <property type="match status" value="1"/>
</dbReference>
<dbReference type="HAMAP" id="MF_02004">
    <property type="entry name" value="Val_tRNA_synth_type1"/>
    <property type="match status" value="1"/>
</dbReference>
<dbReference type="InterPro" id="IPR001412">
    <property type="entry name" value="aa-tRNA-synth_I_CS"/>
</dbReference>
<dbReference type="InterPro" id="IPR002300">
    <property type="entry name" value="aa-tRNA-synth_Ia"/>
</dbReference>
<dbReference type="InterPro" id="IPR033705">
    <property type="entry name" value="Anticodon_Ia_Val"/>
</dbReference>
<dbReference type="InterPro" id="IPR013155">
    <property type="entry name" value="M/V/L/I-tRNA-synth_anticd-bd"/>
</dbReference>
<dbReference type="InterPro" id="IPR014729">
    <property type="entry name" value="Rossmann-like_a/b/a_fold"/>
</dbReference>
<dbReference type="InterPro" id="IPR010978">
    <property type="entry name" value="tRNA-bd_arm"/>
</dbReference>
<dbReference type="InterPro" id="IPR009080">
    <property type="entry name" value="tRNAsynth_Ia_anticodon-bd"/>
</dbReference>
<dbReference type="InterPro" id="IPR037118">
    <property type="entry name" value="Val-tRNA_synth_C_sf"/>
</dbReference>
<dbReference type="InterPro" id="IPR019499">
    <property type="entry name" value="Val-tRNA_synth_tRNA-bd"/>
</dbReference>
<dbReference type="InterPro" id="IPR009008">
    <property type="entry name" value="Val/Leu/Ile-tRNA-synth_edit"/>
</dbReference>
<dbReference type="InterPro" id="IPR002303">
    <property type="entry name" value="Valyl-tRNA_ligase"/>
</dbReference>
<dbReference type="NCBIfam" id="NF004349">
    <property type="entry name" value="PRK05729.1"/>
    <property type="match status" value="1"/>
</dbReference>
<dbReference type="NCBIfam" id="TIGR00422">
    <property type="entry name" value="valS"/>
    <property type="match status" value="1"/>
</dbReference>
<dbReference type="PANTHER" id="PTHR11946:SF93">
    <property type="entry name" value="VALINE--TRNA LIGASE, CHLOROPLASTIC_MITOCHONDRIAL 2"/>
    <property type="match status" value="1"/>
</dbReference>
<dbReference type="PANTHER" id="PTHR11946">
    <property type="entry name" value="VALYL-TRNA SYNTHETASES"/>
    <property type="match status" value="1"/>
</dbReference>
<dbReference type="Pfam" id="PF08264">
    <property type="entry name" value="Anticodon_1"/>
    <property type="match status" value="1"/>
</dbReference>
<dbReference type="Pfam" id="PF00133">
    <property type="entry name" value="tRNA-synt_1"/>
    <property type="match status" value="1"/>
</dbReference>
<dbReference type="Pfam" id="PF10458">
    <property type="entry name" value="Val_tRNA-synt_C"/>
    <property type="match status" value="1"/>
</dbReference>
<dbReference type="PRINTS" id="PR00986">
    <property type="entry name" value="TRNASYNTHVAL"/>
</dbReference>
<dbReference type="SUPFAM" id="SSF47323">
    <property type="entry name" value="Anticodon-binding domain of a subclass of class I aminoacyl-tRNA synthetases"/>
    <property type="match status" value="1"/>
</dbReference>
<dbReference type="SUPFAM" id="SSF52374">
    <property type="entry name" value="Nucleotidylyl transferase"/>
    <property type="match status" value="1"/>
</dbReference>
<dbReference type="SUPFAM" id="SSF46589">
    <property type="entry name" value="tRNA-binding arm"/>
    <property type="match status" value="1"/>
</dbReference>
<dbReference type="SUPFAM" id="SSF50677">
    <property type="entry name" value="ValRS/IleRS/LeuRS editing domain"/>
    <property type="match status" value="1"/>
</dbReference>
<dbReference type="PROSITE" id="PS00178">
    <property type="entry name" value="AA_TRNA_LIGASE_I"/>
    <property type="match status" value="1"/>
</dbReference>
<accession>Q7V9I9</accession>
<protein>
    <recommendedName>
        <fullName evidence="1">Valine--tRNA ligase</fullName>
        <ecNumber evidence="1">6.1.1.9</ecNumber>
    </recommendedName>
    <alternativeName>
        <fullName evidence="1">Valyl-tRNA synthetase</fullName>
        <shortName evidence="1">ValRS</shortName>
    </alternativeName>
</protein>
<name>SYV_PROMA</name>